<reference key="1">
    <citation type="journal article" date="1998" name="Nature">
        <title>Deciphering the biology of Mycobacterium tuberculosis from the complete genome sequence.</title>
        <authorList>
            <person name="Cole S.T."/>
            <person name="Brosch R."/>
            <person name="Parkhill J."/>
            <person name="Garnier T."/>
            <person name="Churcher C.M."/>
            <person name="Harris D.E."/>
            <person name="Gordon S.V."/>
            <person name="Eiglmeier K."/>
            <person name="Gas S."/>
            <person name="Barry C.E. III"/>
            <person name="Tekaia F."/>
            <person name="Badcock K."/>
            <person name="Basham D."/>
            <person name="Brown D."/>
            <person name="Chillingworth T."/>
            <person name="Connor R."/>
            <person name="Davies R.M."/>
            <person name="Devlin K."/>
            <person name="Feltwell T."/>
            <person name="Gentles S."/>
            <person name="Hamlin N."/>
            <person name="Holroyd S."/>
            <person name="Hornsby T."/>
            <person name="Jagels K."/>
            <person name="Krogh A."/>
            <person name="McLean J."/>
            <person name="Moule S."/>
            <person name="Murphy L.D."/>
            <person name="Oliver S."/>
            <person name="Osborne J."/>
            <person name="Quail M.A."/>
            <person name="Rajandream M.A."/>
            <person name="Rogers J."/>
            <person name="Rutter S."/>
            <person name="Seeger K."/>
            <person name="Skelton S."/>
            <person name="Squares S."/>
            <person name="Squares R."/>
            <person name="Sulston J.E."/>
            <person name="Taylor K."/>
            <person name="Whitehead S."/>
            <person name="Barrell B.G."/>
        </authorList>
    </citation>
    <scope>NUCLEOTIDE SEQUENCE [LARGE SCALE GENOMIC DNA]</scope>
    <source>
        <strain>ATCC 25618 / H37Rv</strain>
    </source>
</reference>
<reference key="2">
    <citation type="journal article" date="2009" name="PLoS Genet.">
        <title>Comprehensive functional analysis of Mycobacterium tuberculosis toxin-antitoxin systems: implications for pathogenesis, stress responses, and evolution.</title>
        <authorList>
            <person name="Ramage H.R."/>
            <person name="Connolly L.E."/>
            <person name="Cox J.S."/>
        </authorList>
    </citation>
    <scope>POSSIBLE FUNCTION</scope>
    <source>
        <strain>ATCC 35801 / TMC 107 / Erdman</strain>
    </source>
</reference>
<reference key="3">
    <citation type="journal article" date="2010" name="J. Biol. Chem.">
        <title>Noncognate Mycobacterium tuberculosis toxin-antitoxins can physically and functionally interact.</title>
        <authorList>
            <person name="Zhu L."/>
            <person name="Sharp J.D."/>
            <person name="Kobayashi H."/>
            <person name="Woychik N.A."/>
            <person name="Inouye M."/>
        </authorList>
    </citation>
    <scope>FUNCTION AS AN ANTITOXIN</scope>
    <scope>SUBUNIT</scope>
    <scope>INTERACTION WITH TOXINS MAZF6; MAZF9; VAPC27 AND VAPC40</scope>
    <source>
        <strain>ATCC 25618 / H37Rv</strain>
    </source>
</reference>
<reference key="4">
    <citation type="journal article" date="2011" name="Mol. Cell. Proteomics">
        <title>Proteogenomic analysis of Mycobacterium tuberculosis by high resolution mass spectrometry.</title>
        <authorList>
            <person name="Kelkar D.S."/>
            <person name="Kumar D."/>
            <person name="Kumar P."/>
            <person name="Balakrishnan L."/>
            <person name="Muthusamy B."/>
            <person name="Yadav A.K."/>
            <person name="Shrivastava P."/>
            <person name="Marimuthu A."/>
            <person name="Anand S."/>
            <person name="Sundaram H."/>
            <person name="Kingsbury R."/>
            <person name="Harsha H.C."/>
            <person name="Nair B."/>
            <person name="Prasad T.S."/>
            <person name="Chauhan D.S."/>
            <person name="Katoch K."/>
            <person name="Katoch V.M."/>
            <person name="Kumar P."/>
            <person name="Chaerkady R."/>
            <person name="Ramachandran S."/>
            <person name="Dash D."/>
            <person name="Pandey A."/>
        </authorList>
    </citation>
    <scope>IDENTIFICATION BY MASS SPECTROMETRY [LARGE SCALE ANALYSIS]</scope>
    <source>
        <strain>ATCC 25618 / H37Rv</strain>
    </source>
</reference>
<feature type="chain" id="PRO_0000408044" description="Antitoxin VapB27">
    <location>
        <begin position="1"/>
        <end position="78"/>
    </location>
</feature>
<feature type="domain" description="SpoVT-AbrB" evidence="1">
    <location>
        <begin position="1"/>
        <end position="45"/>
    </location>
</feature>
<proteinExistence type="evidence at protein level"/>
<accession>O07779</accession>
<accession>L0T6Z9</accession>
<gene>
    <name type="primary">vapB27</name>
    <name type="synonym">vapB-mt24</name>
    <name type="ordered locus">Rv0599c</name>
</gene>
<dbReference type="EMBL" id="AL123456">
    <property type="protein sequence ID" value="CCP43338.1"/>
    <property type="molecule type" value="Genomic_DNA"/>
</dbReference>
<dbReference type="PIR" id="B70909">
    <property type="entry name" value="B70909"/>
</dbReference>
<dbReference type="RefSeq" id="NP_215113.1">
    <property type="nucleotide sequence ID" value="NC_000962.3"/>
</dbReference>
<dbReference type="RefSeq" id="WP_003403139.1">
    <property type="nucleotide sequence ID" value="NZ_NVQJ01000033.1"/>
</dbReference>
<dbReference type="STRING" id="83332.Rv0599c"/>
<dbReference type="PaxDb" id="83332-Rv0599c"/>
<dbReference type="DNASU" id="887856"/>
<dbReference type="GeneID" id="45424567"/>
<dbReference type="GeneID" id="887856"/>
<dbReference type="KEGG" id="mtu:Rv0599c"/>
<dbReference type="KEGG" id="mtv:RVBD_0599c"/>
<dbReference type="TubercuList" id="Rv0599c"/>
<dbReference type="eggNOG" id="COG2002">
    <property type="taxonomic scope" value="Bacteria"/>
</dbReference>
<dbReference type="InParanoid" id="O07779"/>
<dbReference type="OrthoDB" id="33406at2"/>
<dbReference type="PhylomeDB" id="O07779"/>
<dbReference type="Proteomes" id="UP000001584">
    <property type="component" value="Chromosome"/>
</dbReference>
<dbReference type="GO" id="GO:0003677">
    <property type="term" value="F:DNA binding"/>
    <property type="evidence" value="ECO:0007669"/>
    <property type="project" value="UniProtKB-KW"/>
</dbReference>
<dbReference type="Gene3D" id="2.10.260.10">
    <property type="match status" value="1"/>
</dbReference>
<dbReference type="InterPro" id="IPR007159">
    <property type="entry name" value="SpoVT-AbrB_dom"/>
</dbReference>
<dbReference type="InterPro" id="IPR037914">
    <property type="entry name" value="SpoVT-AbrB_sf"/>
</dbReference>
<dbReference type="NCBIfam" id="TIGR01439">
    <property type="entry name" value="lp_hng_hel_AbrB"/>
    <property type="match status" value="1"/>
</dbReference>
<dbReference type="Pfam" id="PF04014">
    <property type="entry name" value="MazE_antitoxin"/>
    <property type="match status" value="1"/>
</dbReference>
<dbReference type="SMART" id="SM00966">
    <property type="entry name" value="SpoVT_AbrB"/>
    <property type="match status" value="1"/>
</dbReference>
<dbReference type="SUPFAM" id="SSF89447">
    <property type="entry name" value="AbrB/MazE/MraZ-like"/>
    <property type="match status" value="1"/>
</dbReference>
<dbReference type="PROSITE" id="PS51740">
    <property type="entry name" value="SPOVT_ABRB"/>
    <property type="match status" value="1"/>
</dbReference>
<evidence type="ECO:0000255" key="1">
    <source>
        <dbReference type="PROSITE-ProRule" id="PRU01076"/>
    </source>
</evidence>
<evidence type="ECO:0000269" key="2">
    <source>
    </source>
</evidence>
<evidence type="ECO:0000305" key="3"/>
<name>VPB27_MYCTU</name>
<organism>
    <name type="scientific">Mycobacterium tuberculosis (strain ATCC 25618 / H37Rv)</name>
    <dbReference type="NCBI Taxonomy" id="83332"/>
    <lineage>
        <taxon>Bacteria</taxon>
        <taxon>Bacillati</taxon>
        <taxon>Actinomycetota</taxon>
        <taxon>Actinomycetes</taxon>
        <taxon>Mycobacteriales</taxon>
        <taxon>Mycobacteriaceae</taxon>
        <taxon>Mycobacterium</taxon>
        <taxon>Mycobacterium tuberculosis complex</taxon>
    </lineage>
</organism>
<protein>
    <recommendedName>
        <fullName>Antitoxin VapB27</fullName>
    </recommendedName>
</protein>
<sequence>MKAVVDAAGRIVVPKPLREALGLQPGSTVEISRYGAGLHLIPTGRTARLEEENGVLVATGETTIDDEVVFGLIDSGRK</sequence>
<keyword id="KW-0238">DNA-binding</keyword>
<keyword id="KW-1185">Reference proteome</keyword>
<keyword id="KW-1277">Toxin-antitoxin system</keyword>
<comment type="function">
    <text evidence="2">Antitoxin component of a type II toxin-antitoxin (TA) system. Cognate toxin is VapC27. Upon expression in E.coli partially counteracts the ribonuclease activity of non-cognate toxins MazF6 and MazF9.</text>
</comment>
<comment type="subunit">
    <text evidence="2">Interacts with cognate toxin VapC27 and non-cognate toxins MazF6 and VapC40. Interaction with MazF6 and MazF9 partially neutralizes the toxins.</text>
</comment>
<comment type="similarity">
    <text evidence="3">Belongs to the VapB family.</text>
</comment>